<proteinExistence type="inferred from homology"/>
<organism>
    <name type="scientific">Haemophilus influenzae (strain PittEE)</name>
    <dbReference type="NCBI Taxonomy" id="374930"/>
    <lineage>
        <taxon>Bacteria</taxon>
        <taxon>Pseudomonadati</taxon>
        <taxon>Pseudomonadota</taxon>
        <taxon>Gammaproteobacteria</taxon>
        <taxon>Pasteurellales</taxon>
        <taxon>Pasteurellaceae</taxon>
        <taxon>Haemophilus</taxon>
    </lineage>
</organism>
<comment type="function">
    <text evidence="1">Phosphorolytic 3'-5' exoribonuclease that plays an important role in tRNA 3'-end maturation. Removes nucleotide residues following the 3'-CCA terminus of tRNAs; can also add nucleotides to the ends of RNA molecules by using nucleoside diphosphates as substrates, but this may not be physiologically important. Probably plays a role in initiation of 16S rRNA degradation (leading to ribosome degradation) during starvation.</text>
</comment>
<comment type="catalytic activity">
    <reaction evidence="1">
        <text>tRNA(n+1) + phosphate = tRNA(n) + a ribonucleoside 5'-diphosphate</text>
        <dbReference type="Rhea" id="RHEA:10628"/>
        <dbReference type="Rhea" id="RHEA-COMP:17343"/>
        <dbReference type="Rhea" id="RHEA-COMP:17344"/>
        <dbReference type="ChEBI" id="CHEBI:43474"/>
        <dbReference type="ChEBI" id="CHEBI:57930"/>
        <dbReference type="ChEBI" id="CHEBI:173114"/>
        <dbReference type="EC" id="2.7.7.56"/>
    </reaction>
</comment>
<comment type="subunit">
    <text evidence="1">Homohexameric ring arranged as a trimer of dimers.</text>
</comment>
<comment type="similarity">
    <text evidence="1">Belongs to the RNase PH family.</text>
</comment>
<keyword id="KW-0548">Nucleotidyltransferase</keyword>
<keyword id="KW-0694">RNA-binding</keyword>
<keyword id="KW-0698">rRNA processing</keyword>
<keyword id="KW-0808">Transferase</keyword>
<keyword id="KW-0819">tRNA processing</keyword>
<keyword id="KW-0820">tRNA-binding</keyword>
<dbReference type="EC" id="2.7.7.56" evidence="1"/>
<dbReference type="EMBL" id="CP000671">
    <property type="protein sequence ID" value="ABQ97817.1"/>
    <property type="molecule type" value="Genomic_DNA"/>
</dbReference>
<dbReference type="SMR" id="A5UAL6"/>
<dbReference type="KEGG" id="hip:CGSHiEE_01685"/>
<dbReference type="HOGENOM" id="CLU_050858_0_0_6"/>
<dbReference type="GO" id="GO:0000175">
    <property type="term" value="F:3'-5'-RNA exonuclease activity"/>
    <property type="evidence" value="ECO:0007669"/>
    <property type="project" value="UniProtKB-UniRule"/>
</dbReference>
<dbReference type="GO" id="GO:0000049">
    <property type="term" value="F:tRNA binding"/>
    <property type="evidence" value="ECO:0007669"/>
    <property type="project" value="UniProtKB-UniRule"/>
</dbReference>
<dbReference type="GO" id="GO:0009022">
    <property type="term" value="F:tRNA nucleotidyltransferase activity"/>
    <property type="evidence" value="ECO:0007669"/>
    <property type="project" value="UniProtKB-UniRule"/>
</dbReference>
<dbReference type="GO" id="GO:0016075">
    <property type="term" value="P:rRNA catabolic process"/>
    <property type="evidence" value="ECO:0007669"/>
    <property type="project" value="UniProtKB-UniRule"/>
</dbReference>
<dbReference type="GO" id="GO:0006364">
    <property type="term" value="P:rRNA processing"/>
    <property type="evidence" value="ECO:0007669"/>
    <property type="project" value="UniProtKB-KW"/>
</dbReference>
<dbReference type="GO" id="GO:0008033">
    <property type="term" value="P:tRNA processing"/>
    <property type="evidence" value="ECO:0007669"/>
    <property type="project" value="UniProtKB-UniRule"/>
</dbReference>
<dbReference type="CDD" id="cd11362">
    <property type="entry name" value="RNase_PH_bact"/>
    <property type="match status" value="1"/>
</dbReference>
<dbReference type="FunFam" id="3.30.230.70:FF:000003">
    <property type="entry name" value="Ribonuclease PH"/>
    <property type="match status" value="1"/>
</dbReference>
<dbReference type="Gene3D" id="3.30.230.70">
    <property type="entry name" value="GHMP Kinase, N-terminal domain"/>
    <property type="match status" value="1"/>
</dbReference>
<dbReference type="HAMAP" id="MF_00564">
    <property type="entry name" value="RNase_PH"/>
    <property type="match status" value="1"/>
</dbReference>
<dbReference type="InterPro" id="IPR001247">
    <property type="entry name" value="ExoRNase_PH_dom1"/>
</dbReference>
<dbReference type="InterPro" id="IPR015847">
    <property type="entry name" value="ExoRNase_PH_dom2"/>
</dbReference>
<dbReference type="InterPro" id="IPR036345">
    <property type="entry name" value="ExoRNase_PH_dom2_sf"/>
</dbReference>
<dbReference type="InterPro" id="IPR027408">
    <property type="entry name" value="PNPase/RNase_PH_dom_sf"/>
</dbReference>
<dbReference type="InterPro" id="IPR020568">
    <property type="entry name" value="Ribosomal_Su5_D2-typ_SF"/>
</dbReference>
<dbReference type="InterPro" id="IPR050080">
    <property type="entry name" value="RNase_PH"/>
</dbReference>
<dbReference type="InterPro" id="IPR002381">
    <property type="entry name" value="RNase_PH_bac-type"/>
</dbReference>
<dbReference type="InterPro" id="IPR018336">
    <property type="entry name" value="RNase_PH_CS"/>
</dbReference>
<dbReference type="NCBIfam" id="TIGR01966">
    <property type="entry name" value="RNasePH"/>
    <property type="match status" value="1"/>
</dbReference>
<dbReference type="PANTHER" id="PTHR11953">
    <property type="entry name" value="EXOSOME COMPLEX COMPONENT"/>
    <property type="match status" value="1"/>
</dbReference>
<dbReference type="PANTHER" id="PTHR11953:SF0">
    <property type="entry name" value="EXOSOME COMPLEX COMPONENT RRP41"/>
    <property type="match status" value="1"/>
</dbReference>
<dbReference type="Pfam" id="PF01138">
    <property type="entry name" value="RNase_PH"/>
    <property type="match status" value="1"/>
</dbReference>
<dbReference type="Pfam" id="PF03725">
    <property type="entry name" value="RNase_PH_C"/>
    <property type="match status" value="1"/>
</dbReference>
<dbReference type="SUPFAM" id="SSF55666">
    <property type="entry name" value="Ribonuclease PH domain 2-like"/>
    <property type="match status" value="1"/>
</dbReference>
<dbReference type="SUPFAM" id="SSF54211">
    <property type="entry name" value="Ribosomal protein S5 domain 2-like"/>
    <property type="match status" value="1"/>
</dbReference>
<dbReference type="PROSITE" id="PS01277">
    <property type="entry name" value="RIBONUCLEASE_PH"/>
    <property type="match status" value="1"/>
</dbReference>
<sequence>MRPNNRENNQPRQIKITRNYTKHAEGSVLVEFGDTKVLCTATVEDAVPRFLKGQGQGWVTAEYGMLPRSTHSRMQREAAKGKQGGRTMEIQRLIARSLRAMVDLKALGERAITLDCDVIQADGGTRTASITGAAVALCDAINSLIENGTLKTNPIKGLVSAISVGIVDGQAVCDLEYVEDSAAETDMNVVMMEDGRMIEVQGTAEGEPFSHEELLTLLDLAKQGCNQIFIAQREALGL</sequence>
<protein>
    <recommendedName>
        <fullName evidence="1">Ribonuclease PH</fullName>
        <shortName evidence="1">RNase PH</shortName>
        <ecNumber evidence="1">2.7.7.56</ecNumber>
    </recommendedName>
    <alternativeName>
        <fullName evidence="1">tRNA nucleotidyltransferase</fullName>
    </alternativeName>
</protein>
<feature type="chain" id="PRO_1000024815" description="Ribonuclease PH">
    <location>
        <begin position="1"/>
        <end position="238"/>
    </location>
</feature>
<feature type="binding site" evidence="1">
    <location>
        <position position="86"/>
    </location>
    <ligand>
        <name>phosphate</name>
        <dbReference type="ChEBI" id="CHEBI:43474"/>
        <note>substrate</note>
    </ligand>
</feature>
<feature type="binding site" evidence="1">
    <location>
        <begin position="124"/>
        <end position="126"/>
    </location>
    <ligand>
        <name>phosphate</name>
        <dbReference type="ChEBI" id="CHEBI:43474"/>
        <note>substrate</note>
    </ligand>
</feature>
<gene>
    <name evidence="1" type="primary">rph</name>
    <name type="ordered locus">CGSHiEE_01685</name>
</gene>
<name>RNPH_HAEIE</name>
<accession>A5UAL6</accession>
<evidence type="ECO:0000255" key="1">
    <source>
        <dbReference type="HAMAP-Rule" id="MF_00564"/>
    </source>
</evidence>
<reference key="1">
    <citation type="journal article" date="2007" name="Genome Biol.">
        <title>Characterization and modeling of the Haemophilus influenzae core and supragenomes based on the complete genomic sequences of Rd and 12 clinical nontypeable strains.</title>
        <authorList>
            <person name="Hogg J.S."/>
            <person name="Hu F.Z."/>
            <person name="Janto B."/>
            <person name="Boissy R."/>
            <person name="Hayes J."/>
            <person name="Keefe R."/>
            <person name="Post J.C."/>
            <person name="Ehrlich G.D."/>
        </authorList>
    </citation>
    <scope>NUCLEOTIDE SEQUENCE [LARGE SCALE GENOMIC DNA]</scope>
    <source>
        <strain>PittEE</strain>
    </source>
</reference>